<reference key="1">
    <citation type="submission" date="2005-10" db="EMBL/GenBank/DDBJ databases">
        <title>Complete sequence of chromosome 2 of Burkholderia sp. 383.</title>
        <authorList>
            <consortium name="US DOE Joint Genome Institute"/>
            <person name="Copeland A."/>
            <person name="Lucas S."/>
            <person name="Lapidus A."/>
            <person name="Barry K."/>
            <person name="Detter J.C."/>
            <person name="Glavina T."/>
            <person name="Hammon N."/>
            <person name="Israni S."/>
            <person name="Pitluck S."/>
            <person name="Chain P."/>
            <person name="Malfatti S."/>
            <person name="Shin M."/>
            <person name="Vergez L."/>
            <person name="Schmutz J."/>
            <person name="Larimer F."/>
            <person name="Land M."/>
            <person name="Kyrpides N."/>
            <person name="Lykidis A."/>
            <person name="Richardson P."/>
        </authorList>
    </citation>
    <scope>NUCLEOTIDE SEQUENCE [LARGE SCALE GENOMIC DNA]</scope>
    <source>
        <strain>ATCC 17760 / DSM 23089 / LMG 22485 / NCIMB 9086 / R18194 / 383</strain>
    </source>
</reference>
<dbReference type="EC" id="3.1.1.61" evidence="1"/>
<dbReference type="EC" id="3.5.1.44" evidence="1"/>
<dbReference type="EMBL" id="CP000152">
    <property type="protein sequence ID" value="ABB12414.1"/>
    <property type="molecule type" value="Genomic_DNA"/>
</dbReference>
<dbReference type="RefSeq" id="WP_011355896.1">
    <property type="nucleotide sequence ID" value="NC_007511.1"/>
</dbReference>
<dbReference type="SMR" id="Q393F2"/>
<dbReference type="GeneID" id="45098624"/>
<dbReference type="KEGG" id="bur:Bcep18194_B2303"/>
<dbReference type="PATRIC" id="fig|482957.22.peg.6069"/>
<dbReference type="HOGENOM" id="CLU_000445_51_0_4"/>
<dbReference type="Proteomes" id="UP000002705">
    <property type="component" value="Chromosome 2"/>
</dbReference>
<dbReference type="GO" id="GO:0005737">
    <property type="term" value="C:cytoplasm"/>
    <property type="evidence" value="ECO:0007669"/>
    <property type="project" value="UniProtKB-SubCell"/>
</dbReference>
<dbReference type="GO" id="GO:0000156">
    <property type="term" value="F:phosphorelay response regulator activity"/>
    <property type="evidence" value="ECO:0007669"/>
    <property type="project" value="InterPro"/>
</dbReference>
<dbReference type="GO" id="GO:0008984">
    <property type="term" value="F:protein-glutamate methylesterase activity"/>
    <property type="evidence" value="ECO:0007669"/>
    <property type="project" value="UniProtKB-UniRule"/>
</dbReference>
<dbReference type="GO" id="GO:0050568">
    <property type="term" value="F:protein-glutamine glutaminase activity"/>
    <property type="evidence" value="ECO:0007669"/>
    <property type="project" value="UniProtKB-UniRule"/>
</dbReference>
<dbReference type="GO" id="GO:0006935">
    <property type="term" value="P:chemotaxis"/>
    <property type="evidence" value="ECO:0007669"/>
    <property type="project" value="UniProtKB-UniRule"/>
</dbReference>
<dbReference type="CDD" id="cd16432">
    <property type="entry name" value="CheB_Rec"/>
    <property type="match status" value="1"/>
</dbReference>
<dbReference type="CDD" id="cd17541">
    <property type="entry name" value="REC_CheB-like"/>
    <property type="match status" value="1"/>
</dbReference>
<dbReference type="Gene3D" id="3.40.50.2300">
    <property type="match status" value="1"/>
</dbReference>
<dbReference type="Gene3D" id="3.40.50.180">
    <property type="entry name" value="Methylesterase CheB, C-terminal domain"/>
    <property type="match status" value="1"/>
</dbReference>
<dbReference type="HAMAP" id="MF_00099">
    <property type="entry name" value="CheB_chemtxs"/>
    <property type="match status" value="1"/>
</dbReference>
<dbReference type="InterPro" id="IPR008248">
    <property type="entry name" value="CheB-like"/>
</dbReference>
<dbReference type="InterPro" id="IPR035909">
    <property type="entry name" value="CheB_C"/>
</dbReference>
<dbReference type="InterPro" id="IPR011006">
    <property type="entry name" value="CheY-like_superfamily"/>
</dbReference>
<dbReference type="InterPro" id="IPR000673">
    <property type="entry name" value="Sig_transdc_resp-reg_Me-estase"/>
</dbReference>
<dbReference type="InterPro" id="IPR001789">
    <property type="entry name" value="Sig_transdc_resp-reg_receiver"/>
</dbReference>
<dbReference type="NCBIfam" id="NF009206">
    <property type="entry name" value="PRK12555.1"/>
    <property type="match status" value="1"/>
</dbReference>
<dbReference type="PANTHER" id="PTHR42872">
    <property type="entry name" value="PROTEIN-GLUTAMATE METHYLESTERASE/PROTEIN-GLUTAMINE GLUTAMINASE"/>
    <property type="match status" value="1"/>
</dbReference>
<dbReference type="PANTHER" id="PTHR42872:SF6">
    <property type="entry name" value="PROTEIN-GLUTAMATE METHYLESTERASE_PROTEIN-GLUTAMINE GLUTAMINASE"/>
    <property type="match status" value="1"/>
</dbReference>
<dbReference type="Pfam" id="PF01339">
    <property type="entry name" value="CheB_methylest"/>
    <property type="match status" value="1"/>
</dbReference>
<dbReference type="Pfam" id="PF00072">
    <property type="entry name" value="Response_reg"/>
    <property type="match status" value="1"/>
</dbReference>
<dbReference type="PIRSF" id="PIRSF000876">
    <property type="entry name" value="RR_chemtxs_CheB"/>
    <property type="match status" value="1"/>
</dbReference>
<dbReference type="SMART" id="SM00448">
    <property type="entry name" value="REC"/>
    <property type="match status" value="1"/>
</dbReference>
<dbReference type="SUPFAM" id="SSF52172">
    <property type="entry name" value="CheY-like"/>
    <property type="match status" value="1"/>
</dbReference>
<dbReference type="SUPFAM" id="SSF52738">
    <property type="entry name" value="Methylesterase CheB, C-terminal domain"/>
    <property type="match status" value="1"/>
</dbReference>
<dbReference type="PROSITE" id="PS50122">
    <property type="entry name" value="CHEB"/>
    <property type="match status" value="1"/>
</dbReference>
<dbReference type="PROSITE" id="PS50110">
    <property type="entry name" value="RESPONSE_REGULATORY"/>
    <property type="match status" value="1"/>
</dbReference>
<accession>Q393F2</accession>
<sequence>MNIGIVNDLPLAVEALRRVLALRTDHRVLWVATDGDEAVDFCVAHPPDLVLMDLVMPKVDGVAATRRIMARAPCAILVVTASVSANTSSVYEAMGAGALDAVDTPTLALGLSTDASPQALLAKIDQIGRLLESRTAALVPPGPAPERGQPTLVAIGASAGGPTALTALLRALPADFPAAIVIVQHVDQAFALGMAEWLDGYTRLPVRVARQGSVPQPGEVLLAATNDHLYLSPRGVLGYTRHPVETPYRPSIDVFFNSVADGWQGEAFGVLLTGMGRDGALGLKAMRAKGCYTIAQDEATSAVYGMPKAAAAIGAASAILPLERIAPQLISRITRPLRD</sequence>
<evidence type="ECO:0000255" key="1">
    <source>
        <dbReference type="HAMAP-Rule" id="MF_00099"/>
    </source>
</evidence>
<protein>
    <recommendedName>
        <fullName evidence="1">Protein-glutamate methylesterase/protein-glutamine glutaminase 2</fullName>
        <ecNumber evidence="1">3.1.1.61</ecNumber>
        <ecNumber evidence="1">3.5.1.44</ecNumber>
    </recommendedName>
</protein>
<organism>
    <name type="scientific">Burkholderia lata (strain ATCC 17760 / DSM 23089 / LMG 22485 / NCIMB 9086 / R18194 / 383)</name>
    <dbReference type="NCBI Taxonomy" id="482957"/>
    <lineage>
        <taxon>Bacteria</taxon>
        <taxon>Pseudomonadati</taxon>
        <taxon>Pseudomonadota</taxon>
        <taxon>Betaproteobacteria</taxon>
        <taxon>Burkholderiales</taxon>
        <taxon>Burkholderiaceae</taxon>
        <taxon>Burkholderia</taxon>
        <taxon>Burkholderia cepacia complex</taxon>
    </lineage>
</organism>
<comment type="function">
    <text evidence="1">Involved in chemotaxis. Part of a chemotaxis signal transduction system that modulates chemotaxis in response to various stimuli. Catalyzes the demethylation of specific methylglutamate residues introduced into the chemoreceptors (methyl-accepting chemotaxis proteins or MCP) by CheR. Also mediates the irreversible deamidation of specific glutamine residues to glutamic acid.</text>
</comment>
<comment type="catalytic activity">
    <reaction evidence="1">
        <text>[protein]-L-glutamate 5-O-methyl ester + H2O = L-glutamyl-[protein] + methanol + H(+)</text>
        <dbReference type="Rhea" id="RHEA:23236"/>
        <dbReference type="Rhea" id="RHEA-COMP:10208"/>
        <dbReference type="Rhea" id="RHEA-COMP:10311"/>
        <dbReference type="ChEBI" id="CHEBI:15377"/>
        <dbReference type="ChEBI" id="CHEBI:15378"/>
        <dbReference type="ChEBI" id="CHEBI:17790"/>
        <dbReference type="ChEBI" id="CHEBI:29973"/>
        <dbReference type="ChEBI" id="CHEBI:82795"/>
        <dbReference type="EC" id="3.1.1.61"/>
    </reaction>
</comment>
<comment type="catalytic activity">
    <reaction evidence="1">
        <text>L-glutaminyl-[protein] + H2O = L-glutamyl-[protein] + NH4(+)</text>
        <dbReference type="Rhea" id="RHEA:16441"/>
        <dbReference type="Rhea" id="RHEA-COMP:10207"/>
        <dbReference type="Rhea" id="RHEA-COMP:10208"/>
        <dbReference type="ChEBI" id="CHEBI:15377"/>
        <dbReference type="ChEBI" id="CHEBI:28938"/>
        <dbReference type="ChEBI" id="CHEBI:29973"/>
        <dbReference type="ChEBI" id="CHEBI:30011"/>
        <dbReference type="EC" id="3.5.1.44"/>
    </reaction>
</comment>
<comment type="subcellular location">
    <subcellularLocation>
        <location evidence="1">Cytoplasm</location>
    </subcellularLocation>
</comment>
<comment type="domain">
    <text evidence="1">Contains a C-terminal catalytic domain, and an N-terminal region which modulates catalytic activity.</text>
</comment>
<comment type="PTM">
    <text evidence="1">Phosphorylated by CheA. Phosphorylation of the N-terminal regulatory domain activates the methylesterase activity.</text>
</comment>
<comment type="similarity">
    <text evidence="1">Belongs to the CheB family.</text>
</comment>
<name>CHEB2_BURL3</name>
<feature type="chain" id="PRO_0000225450" description="Protein-glutamate methylesterase/protein-glutamine glutaminase 2">
    <location>
        <begin position="1"/>
        <end position="339"/>
    </location>
</feature>
<feature type="domain" description="Response regulatory" evidence="1">
    <location>
        <begin position="2"/>
        <end position="119"/>
    </location>
</feature>
<feature type="domain" description="CheB-type methylesterase" evidence="1">
    <location>
        <begin position="141"/>
        <end position="336"/>
    </location>
</feature>
<feature type="active site" evidence="1">
    <location>
        <position position="158"/>
    </location>
</feature>
<feature type="active site" evidence="1">
    <location>
        <position position="185"/>
    </location>
</feature>
<feature type="active site" evidence="1">
    <location>
        <position position="278"/>
    </location>
</feature>
<feature type="modified residue" description="4-aspartylphosphate" evidence="1">
    <location>
        <position position="53"/>
    </location>
</feature>
<proteinExistence type="inferred from homology"/>
<keyword id="KW-0145">Chemotaxis</keyword>
<keyword id="KW-0963">Cytoplasm</keyword>
<keyword id="KW-0378">Hydrolase</keyword>
<keyword id="KW-0597">Phosphoprotein</keyword>
<gene>
    <name evidence="1" type="primary">cheB2</name>
    <name type="ordered locus">Bcep18194_B2303</name>
</gene>